<comment type="function">
    <text evidence="2 3">Unlike the other SLC37 members, lacks glucose-6-phosphate antiporter activity (PubMed:21949678). In osteoclasts, forms a transporter complex with ATRAID for nitrogen-containing-bisphophonates (N-BPs) required for releasing N-BP molecules that have trafficked to lysosomes through fluid-phase endocytosis into the cytosol (PubMed:29745899).</text>
</comment>
<comment type="subunit">
    <text evidence="3">Interacts with ATRAID; the interaction is direct and both proteins are mutually dependent for their stability.</text>
</comment>
<comment type="subcellular location">
    <subcellularLocation>
        <location evidence="2">Endoplasmic reticulum membrane</location>
        <topology evidence="1">Multi-pass membrane protein</topology>
    </subcellularLocation>
    <subcellularLocation>
        <location evidence="3">Lysosome membrane</location>
        <topology evidence="1">Multi-pass membrane protein</topology>
    </subcellularLocation>
</comment>
<comment type="alternative products">
    <event type="alternative splicing"/>
    <isoform>
        <id>Q8NCC5-1</id>
        <name>1</name>
        <sequence type="displayed"/>
    </isoform>
    <isoform>
        <id>Q8NCC5-2</id>
        <name>2</name>
        <sequence type="described" ref="VSP_029114"/>
    </isoform>
    <isoform>
        <id>Q8NCC5-3</id>
        <name>3</name>
        <sequence type="described" ref="VSP_029113 VSP_029115"/>
    </isoform>
</comment>
<comment type="tissue specificity">
    <text evidence="2">Expressed in liver, kidney, intestine and pancreas.</text>
</comment>
<comment type="PTM">
    <text evidence="3">Glycosylated.</text>
</comment>
<comment type="similarity">
    <text evidence="6">Belongs to the major facilitator superfamily. Organophosphate:Pi antiporter (OPA) (TC 2.A.1.4) family.</text>
</comment>
<dbReference type="EMBL" id="AL136583">
    <property type="protein sequence ID" value="CAB66518.1"/>
    <property type="molecule type" value="mRNA"/>
</dbReference>
<dbReference type="EMBL" id="AK074823">
    <property type="protein sequence ID" value="BAC11231.1"/>
    <property type="molecule type" value="mRNA"/>
</dbReference>
<dbReference type="EMBL" id="AC093087">
    <property type="protein sequence ID" value="AAQ93361.1"/>
    <property type="molecule type" value="Genomic_DNA"/>
</dbReference>
<dbReference type="EMBL" id="CH236950">
    <property type="protein sequence ID" value="EAL24030.1"/>
    <property type="molecule type" value="Genomic_DNA"/>
</dbReference>
<dbReference type="EMBL" id="CH236950">
    <property type="protein sequence ID" value="EAL24031.1"/>
    <property type="molecule type" value="Genomic_DNA"/>
</dbReference>
<dbReference type="EMBL" id="CH471070">
    <property type="protein sequence ID" value="EAW83944.1"/>
    <property type="molecule type" value="Genomic_DNA"/>
</dbReference>
<dbReference type="EMBL" id="CH471070">
    <property type="protein sequence ID" value="EAW83945.1"/>
    <property type="molecule type" value="Genomic_DNA"/>
</dbReference>
<dbReference type="EMBL" id="CH471070">
    <property type="protein sequence ID" value="EAW83947.1"/>
    <property type="molecule type" value="Genomic_DNA"/>
</dbReference>
<dbReference type="EMBL" id="BC028380">
    <property type="protein sequence ID" value="AAH28380.1"/>
    <property type="molecule type" value="mRNA"/>
</dbReference>
<dbReference type="EMBL" id="BC046567">
    <property type="protein sequence ID" value="AAH46567.1"/>
    <property type="molecule type" value="mRNA"/>
</dbReference>
<dbReference type="CCDS" id="CCDS5858.1">
    <molecule id="Q8NCC5-3"/>
</dbReference>
<dbReference type="CCDS" id="CCDS5859.1">
    <molecule id="Q8NCC5-1"/>
</dbReference>
<dbReference type="CCDS" id="CCDS75669.1">
    <molecule id="Q8NCC5-2"/>
</dbReference>
<dbReference type="RefSeq" id="NP_001274427.1">
    <molecule id="Q8NCC5-2"/>
    <property type="nucleotide sequence ID" value="NM_001287498.2"/>
</dbReference>
<dbReference type="RefSeq" id="NP_115671.1">
    <molecule id="Q8NCC5-3"/>
    <property type="nucleotide sequence ID" value="NM_032295.4"/>
</dbReference>
<dbReference type="RefSeq" id="NP_996996.1">
    <molecule id="Q8NCC5-1"/>
    <property type="nucleotide sequence ID" value="NM_207113.3"/>
</dbReference>
<dbReference type="RefSeq" id="XP_016868201.1">
    <property type="nucleotide sequence ID" value="XM_017012712.1"/>
</dbReference>
<dbReference type="RefSeq" id="XP_016868202.1">
    <property type="nucleotide sequence ID" value="XM_017012713.1"/>
</dbReference>
<dbReference type="SMR" id="Q8NCC5"/>
<dbReference type="BioGRID" id="123982">
    <property type="interactions" value="66"/>
</dbReference>
<dbReference type="FunCoup" id="Q8NCC5">
    <property type="interactions" value="374"/>
</dbReference>
<dbReference type="IntAct" id="Q8NCC5">
    <property type="interactions" value="22"/>
</dbReference>
<dbReference type="STRING" id="9606.ENSP00000321498"/>
<dbReference type="TCDB" id="2.A.1.4.9">
    <property type="family name" value="the major facilitator superfamily (mfs)"/>
</dbReference>
<dbReference type="GlyCosmos" id="Q8NCC5">
    <property type="glycosylation" value="2 sites, No reported glycans"/>
</dbReference>
<dbReference type="GlyGen" id="Q8NCC5">
    <property type="glycosylation" value="2 sites"/>
</dbReference>
<dbReference type="iPTMnet" id="Q8NCC5"/>
<dbReference type="SwissPalm" id="Q8NCC5"/>
<dbReference type="BioMuta" id="SLC37A3"/>
<dbReference type="DMDM" id="160358732"/>
<dbReference type="jPOST" id="Q8NCC5"/>
<dbReference type="MassIVE" id="Q8NCC5"/>
<dbReference type="PaxDb" id="9606-ENSP00000321498"/>
<dbReference type="PeptideAtlas" id="Q8NCC5"/>
<dbReference type="ProteomicsDB" id="72872">
    <molecule id="Q8NCC5-1"/>
</dbReference>
<dbReference type="ProteomicsDB" id="72873">
    <molecule id="Q8NCC5-2"/>
</dbReference>
<dbReference type="ProteomicsDB" id="72874">
    <molecule id="Q8NCC5-3"/>
</dbReference>
<dbReference type="Antibodypedia" id="18263">
    <property type="antibodies" value="34 antibodies from 18 providers"/>
</dbReference>
<dbReference type="DNASU" id="84255"/>
<dbReference type="Ensembl" id="ENST00000326232.14">
    <molecule id="Q8NCC5-1"/>
    <property type="protein sequence ID" value="ENSP00000321498.9"/>
    <property type="gene ID" value="ENSG00000157800.18"/>
</dbReference>
<dbReference type="Ensembl" id="ENST00000340308.7">
    <molecule id="Q8NCC5-3"/>
    <property type="protein sequence ID" value="ENSP00000343358.3"/>
    <property type="gene ID" value="ENSG00000157800.18"/>
</dbReference>
<dbReference type="Ensembl" id="ENST00000447932.6">
    <molecule id="Q8NCC5-2"/>
    <property type="protein sequence ID" value="ENSP00000397481.2"/>
    <property type="gene ID" value="ENSG00000157800.18"/>
</dbReference>
<dbReference type="GeneID" id="84255"/>
<dbReference type="KEGG" id="hsa:84255"/>
<dbReference type="MANE-Select" id="ENST00000326232.14">
    <property type="protein sequence ID" value="ENSP00000321498.9"/>
    <property type="RefSeq nucleotide sequence ID" value="NM_207113.3"/>
    <property type="RefSeq protein sequence ID" value="NP_996996.1"/>
</dbReference>
<dbReference type="UCSC" id="uc003vvo.5">
    <molecule id="Q8NCC5-1"/>
    <property type="organism name" value="human"/>
</dbReference>
<dbReference type="AGR" id="HGNC:20651"/>
<dbReference type="CTD" id="84255"/>
<dbReference type="DisGeNET" id="84255"/>
<dbReference type="GeneCards" id="SLC37A3"/>
<dbReference type="HGNC" id="HGNC:20651">
    <property type="gene designation" value="SLC37A3"/>
</dbReference>
<dbReference type="HPA" id="ENSG00000157800">
    <property type="expression patterns" value="Low tissue specificity"/>
</dbReference>
<dbReference type="MIM" id="619137">
    <property type="type" value="gene"/>
</dbReference>
<dbReference type="neXtProt" id="NX_Q8NCC5"/>
<dbReference type="OpenTargets" id="ENSG00000157800"/>
<dbReference type="PharmGKB" id="PA134895240"/>
<dbReference type="VEuPathDB" id="HostDB:ENSG00000157800"/>
<dbReference type="eggNOG" id="KOG2533">
    <property type="taxonomic scope" value="Eukaryota"/>
</dbReference>
<dbReference type="GeneTree" id="ENSGT00940000163296"/>
<dbReference type="HOGENOM" id="CLU_001265_31_6_1"/>
<dbReference type="InParanoid" id="Q8NCC5"/>
<dbReference type="OMA" id="YQWQVFL"/>
<dbReference type="OrthoDB" id="3639251at2759"/>
<dbReference type="PAN-GO" id="Q8NCC5">
    <property type="GO annotations" value="1 GO annotation based on evolutionary models"/>
</dbReference>
<dbReference type="PhylomeDB" id="Q8NCC5"/>
<dbReference type="TreeFam" id="TF314991"/>
<dbReference type="PathwayCommons" id="Q8NCC5"/>
<dbReference type="SignaLink" id="Q8NCC5"/>
<dbReference type="BioGRID-ORCS" id="84255">
    <property type="hits" value="12 hits in 1158 CRISPR screens"/>
</dbReference>
<dbReference type="ChiTaRS" id="SLC37A3">
    <property type="organism name" value="human"/>
</dbReference>
<dbReference type="GenomeRNAi" id="84255"/>
<dbReference type="Pharos" id="Q8NCC5">
    <property type="development level" value="Tdark"/>
</dbReference>
<dbReference type="PRO" id="PR:Q8NCC5"/>
<dbReference type="Proteomes" id="UP000005640">
    <property type="component" value="Chromosome 7"/>
</dbReference>
<dbReference type="RNAct" id="Q8NCC5">
    <property type="molecule type" value="protein"/>
</dbReference>
<dbReference type="Bgee" id="ENSG00000157800">
    <property type="expression patterns" value="Expressed in body of uterus and 171 other cell types or tissues"/>
</dbReference>
<dbReference type="ExpressionAtlas" id="Q8NCC5">
    <property type="expression patterns" value="baseline and differential"/>
</dbReference>
<dbReference type="GO" id="GO:0005789">
    <property type="term" value="C:endoplasmic reticulum membrane"/>
    <property type="evidence" value="ECO:0000314"/>
    <property type="project" value="UniProtKB"/>
</dbReference>
<dbReference type="GO" id="GO:0005765">
    <property type="term" value="C:lysosomal membrane"/>
    <property type="evidence" value="ECO:0000314"/>
    <property type="project" value="UniProtKB"/>
</dbReference>
<dbReference type="GO" id="GO:0042910">
    <property type="term" value="F:xenobiotic transmembrane transporter activity"/>
    <property type="evidence" value="ECO:0000314"/>
    <property type="project" value="UniProtKB"/>
</dbReference>
<dbReference type="GO" id="GO:0006855">
    <property type="term" value="P:xenobiotic transmembrane transport"/>
    <property type="evidence" value="ECO:0000314"/>
    <property type="project" value="UniProtKB"/>
</dbReference>
<dbReference type="CDD" id="cd17342">
    <property type="entry name" value="MFS_SLC37A3"/>
    <property type="match status" value="1"/>
</dbReference>
<dbReference type="FunFam" id="1.20.1250.20:FF:000028">
    <property type="entry name" value="Sugar phosphate exchanger 3 isoform 1"/>
    <property type="match status" value="1"/>
</dbReference>
<dbReference type="FunFam" id="1.20.1250.20:FF:000132">
    <property type="entry name" value="sugar phosphate exchanger 3 isoform X1"/>
    <property type="match status" value="1"/>
</dbReference>
<dbReference type="Gene3D" id="1.20.1250.20">
    <property type="entry name" value="MFS general substrate transporter like domains"/>
    <property type="match status" value="2"/>
</dbReference>
<dbReference type="InterPro" id="IPR011701">
    <property type="entry name" value="MFS"/>
</dbReference>
<dbReference type="InterPro" id="IPR020846">
    <property type="entry name" value="MFS_dom"/>
</dbReference>
<dbReference type="InterPro" id="IPR036259">
    <property type="entry name" value="MFS_trans_sf"/>
</dbReference>
<dbReference type="InterPro" id="IPR000849">
    <property type="entry name" value="Sugar_P_transporter"/>
</dbReference>
<dbReference type="PANTHER" id="PTHR43184">
    <property type="entry name" value="MAJOR FACILITATOR SUPERFAMILY TRANSPORTER 16, ISOFORM B"/>
    <property type="match status" value="1"/>
</dbReference>
<dbReference type="PANTHER" id="PTHR43184:SF12">
    <property type="entry name" value="SUGAR PHOSPHATE EXCHANGER 3"/>
    <property type="match status" value="1"/>
</dbReference>
<dbReference type="Pfam" id="PF07690">
    <property type="entry name" value="MFS_1"/>
    <property type="match status" value="1"/>
</dbReference>
<dbReference type="PIRSF" id="PIRSF002808">
    <property type="entry name" value="Hexose_phosphate_transp"/>
    <property type="match status" value="1"/>
</dbReference>
<dbReference type="SUPFAM" id="SSF103473">
    <property type="entry name" value="MFS general substrate transporter"/>
    <property type="match status" value="1"/>
</dbReference>
<dbReference type="PROSITE" id="PS50850">
    <property type="entry name" value="MFS"/>
    <property type="match status" value="1"/>
</dbReference>
<reference key="1">
    <citation type="journal article" date="2001" name="Genome Res.">
        <title>Towards a catalog of human genes and proteins: sequencing and analysis of 500 novel complete protein coding human cDNAs.</title>
        <authorList>
            <person name="Wiemann S."/>
            <person name="Weil B."/>
            <person name="Wellenreuther R."/>
            <person name="Gassenhuber J."/>
            <person name="Glassl S."/>
            <person name="Ansorge W."/>
            <person name="Boecher M."/>
            <person name="Bloecker H."/>
            <person name="Bauersachs S."/>
            <person name="Blum H."/>
            <person name="Lauber J."/>
            <person name="Duesterhoeft A."/>
            <person name="Beyer A."/>
            <person name="Koehrer K."/>
            <person name="Strack N."/>
            <person name="Mewes H.-W."/>
            <person name="Ottenwaelder B."/>
            <person name="Obermaier B."/>
            <person name="Tampe J."/>
            <person name="Heubner D."/>
            <person name="Wambutt R."/>
            <person name="Korn B."/>
            <person name="Klein M."/>
            <person name="Poustka A."/>
        </authorList>
    </citation>
    <scope>NUCLEOTIDE SEQUENCE [LARGE SCALE MRNA] (ISOFORM 3)</scope>
    <source>
        <tissue>Amygdala</tissue>
    </source>
</reference>
<reference key="2">
    <citation type="journal article" date="2004" name="Nat. Genet.">
        <title>Complete sequencing and characterization of 21,243 full-length human cDNAs.</title>
        <authorList>
            <person name="Ota T."/>
            <person name="Suzuki Y."/>
            <person name="Nishikawa T."/>
            <person name="Otsuki T."/>
            <person name="Sugiyama T."/>
            <person name="Irie R."/>
            <person name="Wakamatsu A."/>
            <person name="Hayashi K."/>
            <person name="Sato H."/>
            <person name="Nagai K."/>
            <person name="Kimura K."/>
            <person name="Makita H."/>
            <person name="Sekine M."/>
            <person name="Obayashi M."/>
            <person name="Nishi T."/>
            <person name="Shibahara T."/>
            <person name="Tanaka T."/>
            <person name="Ishii S."/>
            <person name="Yamamoto J."/>
            <person name="Saito K."/>
            <person name="Kawai Y."/>
            <person name="Isono Y."/>
            <person name="Nakamura Y."/>
            <person name="Nagahari K."/>
            <person name="Murakami K."/>
            <person name="Yasuda T."/>
            <person name="Iwayanagi T."/>
            <person name="Wagatsuma M."/>
            <person name="Shiratori A."/>
            <person name="Sudo H."/>
            <person name="Hosoiri T."/>
            <person name="Kaku Y."/>
            <person name="Kodaira H."/>
            <person name="Kondo H."/>
            <person name="Sugawara M."/>
            <person name="Takahashi M."/>
            <person name="Kanda K."/>
            <person name="Yokoi T."/>
            <person name="Furuya T."/>
            <person name="Kikkawa E."/>
            <person name="Omura Y."/>
            <person name="Abe K."/>
            <person name="Kamihara K."/>
            <person name="Katsuta N."/>
            <person name="Sato K."/>
            <person name="Tanikawa M."/>
            <person name="Yamazaki M."/>
            <person name="Ninomiya K."/>
            <person name="Ishibashi T."/>
            <person name="Yamashita H."/>
            <person name="Murakawa K."/>
            <person name="Fujimori K."/>
            <person name="Tanai H."/>
            <person name="Kimata M."/>
            <person name="Watanabe M."/>
            <person name="Hiraoka S."/>
            <person name="Chiba Y."/>
            <person name="Ishida S."/>
            <person name="Ono Y."/>
            <person name="Takiguchi S."/>
            <person name="Watanabe S."/>
            <person name="Yosida M."/>
            <person name="Hotuta T."/>
            <person name="Kusano J."/>
            <person name="Kanehori K."/>
            <person name="Takahashi-Fujii A."/>
            <person name="Hara H."/>
            <person name="Tanase T.-O."/>
            <person name="Nomura Y."/>
            <person name="Togiya S."/>
            <person name="Komai F."/>
            <person name="Hara R."/>
            <person name="Takeuchi K."/>
            <person name="Arita M."/>
            <person name="Imose N."/>
            <person name="Musashino K."/>
            <person name="Yuuki H."/>
            <person name="Oshima A."/>
            <person name="Sasaki N."/>
            <person name="Aotsuka S."/>
            <person name="Yoshikawa Y."/>
            <person name="Matsunawa H."/>
            <person name="Ichihara T."/>
            <person name="Shiohata N."/>
            <person name="Sano S."/>
            <person name="Moriya S."/>
            <person name="Momiyama H."/>
            <person name="Satoh N."/>
            <person name="Takami S."/>
            <person name="Terashima Y."/>
            <person name="Suzuki O."/>
            <person name="Nakagawa S."/>
            <person name="Senoh A."/>
            <person name="Mizoguchi H."/>
            <person name="Goto Y."/>
            <person name="Shimizu F."/>
            <person name="Wakebe H."/>
            <person name="Hishigaki H."/>
            <person name="Watanabe T."/>
            <person name="Sugiyama A."/>
            <person name="Takemoto M."/>
            <person name="Kawakami B."/>
            <person name="Yamazaki M."/>
            <person name="Watanabe K."/>
            <person name="Kumagai A."/>
            <person name="Itakura S."/>
            <person name="Fukuzumi Y."/>
            <person name="Fujimori Y."/>
            <person name="Komiyama M."/>
            <person name="Tashiro H."/>
            <person name="Tanigami A."/>
            <person name="Fujiwara T."/>
            <person name="Ono T."/>
            <person name="Yamada K."/>
            <person name="Fujii Y."/>
            <person name="Ozaki K."/>
            <person name="Hirao M."/>
            <person name="Ohmori Y."/>
            <person name="Kawabata A."/>
            <person name="Hikiji T."/>
            <person name="Kobatake N."/>
            <person name="Inagaki H."/>
            <person name="Ikema Y."/>
            <person name="Okamoto S."/>
            <person name="Okitani R."/>
            <person name="Kawakami T."/>
            <person name="Noguchi S."/>
            <person name="Itoh T."/>
            <person name="Shigeta K."/>
            <person name="Senba T."/>
            <person name="Matsumura K."/>
            <person name="Nakajima Y."/>
            <person name="Mizuno T."/>
            <person name="Morinaga M."/>
            <person name="Sasaki M."/>
            <person name="Togashi T."/>
            <person name="Oyama M."/>
            <person name="Hata H."/>
            <person name="Watanabe M."/>
            <person name="Komatsu T."/>
            <person name="Mizushima-Sugano J."/>
            <person name="Satoh T."/>
            <person name="Shirai Y."/>
            <person name="Takahashi Y."/>
            <person name="Nakagawa K."/>
            <person name="Okumura K."/>
            <person name="Nagase T."/>
            <person name="Nomura N."/>
            <person name="Kikuchi H."/>
            <person name="Masuho Y."/>
            <person name="Yamashita R."/>
            <person name="Nakai K."/>
            <person name="Yada T."/>
            <person name="Nakamura Y."/>
            <person name="Ohara O."/>
            <person name="Isogai T."/>
            <person name="Sugano S."/>
        </authorList>
    </citation>
    <scope>NUCLEOTIDE SEQUENCE [LARGE SCALE MRNA] (ISOFORM 1)</scope>
</reference>
<reference key="3">
    <citation type="journal article" date="2003" name="Nature">
        <title>The DNA sequence of human chromosome 7.</title>
        <authorList>
            <person name="Hillier L.W."/>
            <person name="Fulton R.S."/>
            <person name="Fulton L.A."/>
            <person name="Graves T.A."/>
            <person name="Pepin K.H."/>
            <person name="Wagner-McPherson C."/>
            <person name="Layman D."/>
            <person name="Maas J."/>
            <person name="Jaeger S."/>
            <person name="Walker R."/>
            <person name="Wylie K."/>
            <person name="Sekhon M."/>
            <person name="Becker M.C."/>
            <person name="O'Laughlin M.D."/>
            <person name="Schaller M.E."/>
            <person name="Fewell G.A."/>
            <person name="Delehaunty K.D."/>
            <person name="Miner T.L."/>
            <person name="Nash W.E."/>
            <person name="Cordes M."/>
            <person name="Du H."/>
            <person name="Sun H."/>
            <person name="Edwards J."/>
            <person name="Bradshaw-Cordum H."/>
            <person name="Ali J."/>
            <person name="Andrews S."/>
            <person name="Isak A."/>
            <person name="Vanbrunt A."/>
            <person name="Nguyen C."/>
            <person name="Du F."/>
            <person name="Lamar B."/>
            <person name="Courtney L."/>
            <person name="Kalicki J."/>
            <person name="Ozersky P."/>
            <person name="Bielicki L."/>
            <person name="Scott K."/>
            <person name="Holmes A."/>
            <person name="Harkins R."/>
            <person name="Harris A."/>
            <person name="Strong C.M."/>
            <person name="Hou S."/>
            <person name="Tomlinson C."/>
            <person name="Dauphin-Kohlberg S."/>
            <person name="Kozlowicz-Reilly A."/>
            <person name="Leonard S."/>
            <person name="Rohlfing T."/>
            <person name="Rock S.M."/>
            <person name="Tin-Wollam A.-M."/>
            <person name="Abbott A."/>
            <person name="Minx P."/>
            <person name="Maupin R."/>
            <person name="Strowmatt C."/>
            <person name="Latreille P."/>
            <person name="Miller N."/>
            <person name="Johnson D."/>
            <person name="Murray J."/>
            <person name="Woessner J.P."/>
            <person name="Wendl M.C."/>
            <person name="Yang S.-P."/>
            <person name="Schultz B.R."/>
            <person name="Wallis J.W."/>
            <person name="Spieth J."/>
            <person name="Bieri T.A."/>
            <person name="Nelson J.O."/>
            <person name="Berkowicz N."/>
            <person name="Wohldmann P.E."/>
            <person name="Cook L.L."/>
            <person name="Hickenbotham M.T."/>
            <person name="Eldred J."/>
            <person name="Williams D."/>
            <person name="Bedell J.A."/>
            <person name="Mardis E.R."/>
            <person name="Clifton S.W."/>
            <person name="Chissoe S.L."/>
            <person name="Marra M.A."/>
            <person name="Raymond C."/>
            <person name="Haugen E."/>
            <person name="Gillett W."/>
            <person name="Zhou Y."/>
            <person name="James R."/>
            <person name="Phelps K."/>
            <person name="Iadanoto S."/>
            <person name="Bubb K."/>
            <person name="Simms E."/>
            <person name="Levy R."/>
            <person name="Clendenning J."/>
            <person name="Kaul R."/>
            <person name="Kent W.J."/>
            <person name="Furey T.S."/>
            <person name="Baertsch R.A."/>
            <person name="Brent M.R."/>
            <person name="Keibler E."/>
            <person name="Flicek P."/>
            <person name="Bork P."/>
            <person name="Suyama M."/>
            <person name="Bailey J.A."/>
            <person name="Portnoy M.E."/>
            <person name="Torrents D."/>
            <person name="Chinwalla A.T."/>
            <person name="Gish W.R."/>
            <person name="Eddy S.R."/>
            <person name="McPherson J.D."/>
            <person name="Olson M.V."/>
            <person name="Eichler E.E."/>
            <person name="Green E.D."/>
            <person name="Waterston R.H."/>
            <person name="Wilson R.K."/>
        </authorList>
    </citation>
    <scope>NUCLEOTIDE SEQUENCE [LARGE SCALE GENOMIC DNA]</scope>
</reference>
<reference key="4">
    <citation type="journal article" date="2003" name="Science">
        <title>Human chromosome 7: DNA sequence and biology.</title>
        <authorList>
            <person name="Scherer S.W."/>
            <person name="Cheung J."/>
            <person name="MacDonald J.R."/>
            <person name="Osborne L.R."/>
            <person name="Nakabayashi K."/>
            <person name="Herbrick J.-A."/>
            <person name="Carson A.R."/>
            <person name="Parker-Katiraee L."/>
            <person name="Skaug J."/>
            <person name="Khaja R."/>
            <person name="Zhang J."/>
            <person name="Hudek A.K."/>
            <person name="Li M."/>
            <person name="Haddad M."/>
            <person name="Duggan G.E."/>
            <person name="Fernandez B.A."/>
            <person name="Kanematsu E."/>
            <person name="Gentles S."/>
            <person name="Christopoulos C.C."/>
            <person name="Choufani S."/>
            <person name="Kwasnicka D."/>
            <person name="Zheng X.H."/>
            <person name="Lai Z."/>
            <person name="Nusskern D.R."/>
            <person name="Zhang Q."/>
            <person name="Gu Z."/>
            <person name="Lu F."/>
            <person name="Zeesman S."/>
            <person name="Nowaczyk M.J."/>
            <person name="Teshima I."/>
            <person name="Chitayat D."/>
            <person name="Shuman C."/>
            <person name="Weksberg R."/>
            <person name="Zackai E.H."/>
            <person name="Grebe T.A."/>
            <person name="Cox S.R."/>
            <person name="Kirkpatrick S.J."/>
            <person name="Rahman N."/>
            <person name="Friedman J.M."/>
            <person name="Heng H.H.Q."/>
            <person name="Pelicci P.G."/>
            <person name="Lo-Coco F."/>
            <person name="Belloni E."/>
            <person name="Shaffer L.G."/>
            <person name="Pober B."/>
            <person name="Morton C.C."/>
            <person name="Gusella J.F."/>
            <person name="Bruns G.A.P."/>
            <person name="Korf B.R."/>
            <person name="Quade B.J."/>
            <person name="Ligon A.H."/>
            <person name="Ferguson H."/>
            <person name="Higgins A.W."/>
            <person name="Leach N.T."/>
            <person name="Herrick S.R."/>
            <person name="Lemyre E."/>
            <person name="Farra C.G."/>
            <person name="Kim H.-G."/>
            <person name="Summers A.M."/>
            <person name="Gripp K.W."/>
            <person name="Roberts W."/>
            <person name="Szatmari P."/>
            <person name="Winsor E.J.T."/>
            <person name="Grzeschik K.-H."/>
            <person name="Teebi A."/>
            <person name="Minassian B.A."/>
            <person name="Kere J."/>
            <person name="Armengol L."/>
            <person name="Pujana M.A."/>
            <person name="Estivill X."/>
            <person name="Wilson M.D."/>
            <person name="Koop B.F."/>
            <person name="Tosi S."/>
            <person name="Moore G.E."/>
            <person name="Boright A.P."/>
            <person name="Zlotorynski E."/>
            <person name="Kerem B."/>
            <person name="Kroisel P.M."/>
            <person name="Petek E."/>
            <person name="Oscier D.G."/>
            <person name="Mould S.J."/>
            <person name="Doehner H."/>
            <person name="Doehner K."/>
            <person name="Rommens J.M."/>
            <person name="Vincent J.B."/>
            <person name="Venter J.C."/>
            <person name="Li P.W."/>
            <person name="Mural R.J."/>
            <person name="Adams M.D."/>
            <person name="Tsui L.-C."/>
        </authorList>
    </citation>
    <scope>NUCLEOTIDE SEQUENCE [LARGE SCALE GENOMIC DNA]</scope>
</reference>
<reference key="5">
    <citation type="submission" date="2005-07" db="EMBL/GenBank/DDBJ databases">
        <authorList>
            <person name="Mural R.J."/>
            <person name="Istrail S."/>
            <person name="Sutton G.G."/>
            <person name="Florea L."/>
            <person name="Halpern A.L."/>
            <person name="Mobarry C.M."/>
            <person name="Lippert R."/>
            <person name="Walenz B."/>
            <person name="Shatkay H."/>
            <person name="Dew I."/>
            <person name="Miller J.R."/>
            <person name="Flanigan M.J."/>
            <person name="Edwards N.J."/>
            <person name="Bolanos R."/>
            <person name="Fasulo D."/>
            <person name="Halldorsson B.V."/>
            <person name="Hannenhalli S."/>
            <person name="Turner R."/>
            <person name="Yooseph S."/>
            <person name="Lu F."/>
            <person name="Nusskern D.R."/>
            <person name="Shue B.C."/>
            <person name="Zheng X.H."/>
            <person name="Zhong F."/>
            <person name="Delcher A.L."/>
            <person name="Huson D.H."/>
            <person name="Kravitz S.A."/>
            <person name="Mouchard L."/>
            <person name="Reinert K."/>
            <person name="Remington K.A."/>
            <person name="Clark A.G."/>
            <person name="Waterman M.S."/>
            <person name="Eichler E.E."/>
            <person name="Adams M.D."/>
            <person name="Hunkapiller M.W."/>
            <person name="Myers E.W."/>
            <person name="Venter J.C."/>
        </authorList>
    </citation>
    <scope>NUCLEOTIDE SEQUENCE [LARGE SCALE GENOMIC DNA]</scope>
</reference>
<reference key="6">
    <citation type="journal article" date="2004" name="Genome Res.">
        <title>The status, quality, and expansion of the NIH full-length cDNA project: the Mammalian Gene Collection (MGC).</title>
        <authorList>
            <consortium name="The MGC Project Team"/>
        </authorList>
    </citation>
    <scope>NUCLEOTIDE SEQUENCE [LARGE SCALE MRNA] (ISOFORMS 1 AND 2)</scope>
    <source>
        <tissue>Brain</tissue>
    </source>
</reference>
<reference key="7">
    <citation type="journal article" date="2011" name="PLoS ONE">
        <title>SLC37A1 and SLC37A2 are phosphate-linked, glucose-6-phosphate antiporters.</title>
        <authorList>
            <person name="Pan C.J."/>
            <person name="Chen S.Y."/>
            <person name="Jun H.S."/>
            <person name="Lin S.R."/>
            <person name="Mansfield B.C."/>
            <person name="Chou J.Y."/>
        </authorList>
    </citation>
    <scope>SUBCELLULAR LOCATION</scope>
    <scope>TISSUE SPECIFICITY</scope>
    <scope>FUNCTION</scope>
</reference>
<reference key="8">
    <citation type="journal article" date="2018" name="Elife">
        <title>Identification of a transporter complex responsible for the cytosolic entry of nitrogen-containing bisphosphonates.</title>
        <authorList>
            <person name="Yu Z."/>
            <person name="Surface L.E."/>
            <person name="Park C.Y."/>
            <person name="Horlbeck M.A."/>
            <person name="Wyant G.A."/>
            <person name="Abu-Remaileh M."/>
            <person name="Peterson T.R."/>
            <person name="Sabatini D.M."/>
            <person name="Weissman J.S."/>
            <person name="O'Shea E.K."/>
        </authorList>
    </citation>
    <scope>FUNCTION</scope>
    <scope>SUBCELLULAR LOCATION</scope>
    <scope>INTERACTION WITH ATRAID</scope>
    <scope>GLYCOSYLATION</scope>
</reference>
<accession>Q8NCC5</accession>
<accession>Q6PIU7</accession>
<accession>Q86SS4</accession>
<accession>Q9BQG7</accession>
<proteinExistence type="evidence at protein level"/>
<organism>
    <name type="scientific">Homo sapiens</name>
    <name type="common">Human</name>
    <dbReference type="NCBI Taxonomy" id="9606"/>
    <lineage>
        <taxon>Eukaryota</taxon>
        <taxon>Metazoa</taxon>
        <taxon>Chordata</taxon>
        <taxon>Craniata</taxon>
        <taxon>Vertebrata</taxon>
        <taxon>Euteleostomi</taxon>
        <taxon>Mammalia</taxon>
        <taxon>Eutheria</taxon>
        <taxon>Euarchontoglires</taxon>
        <taxon>Primates</taxon>
        <taxon>Haplorrhini</taxon>
        <taxon>Catarrhini</taxon>
        <taxon>Hominidae</taxon>
        <taxon>Homo</taxon>
    </lineage>
</organism>
<name>SPX3_HUMAN</name>
<evidence type="ECO:0000255" key="1"/>
<evidence type="ECO:0000269" key="2">
    <source>
    </source>
</evidence>
<evidence type="ECO:0000269" key="3">
    <source>
    </source>
</evidence>
<evidence type="ECO:0000303" key="4">
    <source>
    </source>
</evidence>
<evidence type="ECO:0000303" key="5">
    <source>
    </source>
</evidence>
<evidence type="ECO:0000305" key="6"/>
<evidence type="ECO:0000312" key="7">
    <source>
        <dbReference type="HGNC" id="HGNC:20651"/>
    </source>
</evidence>
<sequence length="494" mass="54486">MAWPNVFQRGSLLSQFSHHHVVVFLLTFFSYSLLHASRKTFSNVKVSISEQWTPSAFNTSVELPVEIWSSNHLFPSAEKATLFLGTLDTIFLFSYAVGLFISGIVGDRLNLRWVLSFGMCSSALVVFVFGALTEWLRFYNKWLYCCLWIVNGLLQSTGWPCVVAVMGNWFGKAGRGVVFGLWSACASVGNILGACLASSVLQYGYEYAFLVTASVQFAGGIVIFFGLLVSPEEIGLSGIEAEENFEEDSHRPLINGGENEDEYEPNYSIQDDSSVAQVKAISFYQACCLPGVIPYSLAYACLKLVNYSFFFWLPFYLSNNFGWKEAEADKLSIWYDVGGIIGGTLQGFISDVLQKRAPVLALSLLLAVGSLIGYSRSPNDKSINALLMTVTGFFIGGPSNMISSAISADLGRQELIQRSSEALATVTGIVDGSGSIGAAVGQYLVSLIRDKLGWMWVFYFFILMTSCTIVFISPLIVREIFSLVLRRQAHILRE</sequence>
<gene>
    <name evidence="7" type="primary">SLC37A3</name>
    <name type="synonym">SPX3</name>
</gene>
<protein>
    <recommendedName>
        <fullName>Sugar phosphate exchanger 3</fullName>
    </recommendedName>
    <alternativeName>
        <fullName>Solute carrier family 37 member 3</fullName>
    </alternativeName>
</protein>
<keyword id="KW-0025">Alternative splicing</keyword>
<keyword id="KW-0256">Endoplasmic reticulum</keyword>
<keyword id="KW-0325">Glycoprotein</keyword>
<keyword id="KW-0458">Lysosome</keyword>
<keyword id="KW-0472">Membrane</keyword>
<keyword id="KW-1267">Proteomics identification</keyword>
<keyword id="KW-1185">Reference proteome</keyword>
<keyword id="KW-0762">Sugar transport</keyword>
<keyword id="KW-0812">Transmembrane</keyword>
<keyword id="KW-1133">Transmembrane helix</keyword>
<keyword id="KW-0813">Transport</keyword>
<feature type="chain" id="PRO_0000309278" description="Sugar phosphate exchanger 3">
    <location>
        <begin position="1"/>
        <end position="494"/>
    </location>
</feature>
<feature type="transmembrane region" description="Helical" evidence="1">
    <location>
        <begin position="16"/>
        <end position="36"/>
    </location>
</feature>
<feature type="transmembrane region" description="Helical" evidence="1">
    <location>
        <begin position="81"/>
        <end position="101"/>
    </location>
</feature>
<feature type="transmembrane region" description="Helical" evidence="1">
    <location>
        <begin position="113"/>
        <end position="133"/>
    </location>
</feature>
<feature type="transmembrane region" description="Helical" evidence="1">
    <location>
        <begin position="147"/>
        <end position="167"/>
    </location>
</feature>
<feature type="transmembrane region" description="Helical" evidence="1">
    <location>
        <begin position="177"/>
        <end position="197"/>
    </location>
</feature>
<feature type="transmembrane region" description="Helical" evidence="1">
    <location>
        <begin position="209"/>
        <end position="229"/>
    </location>
</feature>
<feature type="transmembrane region" description="Helical" evidence="1">
    <location>
        <begin position="297"/>
        <end position="317"/>
    </location>
</feature>
<feature type="transmembrane region" description="Helical" evidence="1">
    <location>
        <begin position="333"/>
        <end position="353"/>
    </location>
</feature>
<feature type="transmembrane region" description="Helical" evidence="1">
    <location>
        <begin position="357"/>
        <end position="377"/>
    </location>
</feature>
<feature type="transmembrane region" description="Helical" evidence="1">
    <location>
        <begin position="386"/>
        <end position="406"/>
    </location>
</feature>
<feature type="transmembrane region" description="Helical" evidence="1">
    <location>
        <begin position="428"/>
        <end position="448"/>
    </location>
</feature>
<feature type="transmembrane region" description="Helical" evidence="1">
    <location>
        <begin position="452"/>
        <end position="472"/>
    </location>
</feature>
<feature type="glycosylation site" description="N-linked (GlcNAc...) asparagine" evidence="1">
    <location>
        <position position="58"/>
    </location>
</feature>
<feature type="glycosylation site" description="N-linked (GlcNAc...) asparagine" evidence="1">
    <location>
        <position position="266"/>
    </location>
</feature>
<feature type="splice variant" id="VSP_029113" description="In isoform 3." evidence="4">
    <original>GGTLQGFISDVLQKRAPVLALSLLLAVGSLIGYSRSPNDKSINALLMTVTGFFIGGPSNMISSAISADLGRQELIQRSSEALATVTGIVDGSGSIGAAVGQY</original>
    <variation>VFSVSDPGQARMDVGFLLFHSHDKLYNCVYLAINSEGNILSRAKETGSHIEGVTGARETERTMSATSGPLGLRVCPNLGLSRSSSLILDCQASLNTASHLRC</variation>
    <location>
        <begin position="342"/>
        <end position="443"/>
    </location>
</feature>
<feature type="splice variant" id="VSP_029114" description="In isoform 2." evidence="5">
    <location>
        <begin position="377"/>
        <end position="392"/>
    </location>
</feature>
<feature type="splice variant" id="VSP_029115" description="In isoform 3." evidence="4">
    <location>
        <begin position="444"/>
        <end position="494"/>
    </location>
</feature>
<feature type="sequence conflict" description="In Ref. 1; BAC11231." evidence="6" ref="1">
    <original>V</original>
    <variation>L</variation>
    <location>
        <position position="65"/>
    </location>
</feature>
<feature type="sequence conflict" description="In Ref. 1; BAC11231." evidence="6" ref="1">
    <original>I</original>
    <variation>M</variation>
    <location>
        <position position="281"/>
    </location>
</feature>